<dbReference type="EMBL" id="M85085">
    <property type="protein sequence ID" value="AAA35724.1"/>
    <property type="molecule type" value="mRNA"/>
</dbReference>
<dbReference type="EMBL" id="BT009778">
    <property type="protein sequence ID" value="AAP88780.1"/>
    <property type="molecule type" value="mRNA"/>
</dbReference>
<dbReference type="EMBL" id="Z83819">
    <property type="status" value="NOT_ANNOTATED_CDS"/>
    <property type="molecule type" value="Genomic_DNA"/>
</dbReference>
<dbReference type="EMBL" id="Z95327">
    <property type="status" value="NOT_ANNOTATED_CDS"/>
    <property type="molecule type" value="Genomic_DNA"/>
</dbReference>
<dbReference type="EMBL" id="BC017712">
    <property type="protein sequence ID" value="AAH17712.1"/>
    <property type="molecule type" value="mRNA"/>
</dbReference>
<dbReference type="EMBL" id="BC033135">
    <property type="protein sequence ID" value="AAH33135.1"/>
    <property type="molecule type" value="mRNA"/>
</dbReference>
<dbReference type="CCDS" id="CCDS14473.1">
    <molecule id="P33240-1"/>
</dbReference>
<dbReference type="PIR" id="A40220">
    <property type="entry name" value="A40220"/>
</dbReference>
<dbReference type="RefSeq" id="NP_001293138.1">
    <molecule id="P33240-2"/>
    <property type="nucleotide sequence ID" value="NM_001306209.2"/>
</dbReference>
<dbReference type="RefSeq" id="NP_001316.1">
    <molecule id="P33240-1"/>
    <property type="nucleotide sequence ID" value="NM_001325.3"/>
</dbReference>
<dbReference type="PDB" id="1P1T">
    <property type="method" value="NMR"/>
    <property type="chains" value="A=8-111"/>
</dbReference>
<dbReference type="PDB" id="2J8P">
    <property type="method" value="NMR"/>
    <property type="chains" value="A=531-577"/>
</dbReference>
<dbReference type="PDB" id="6Q2I">
    <property type="method" value="NMR"/>
    <property type="chains" value="A=1-107"/>
</dbReference>
<dbReference type="PDB" id="6TZE">
    <property type="method" value="NMR"/>
    <property type="chains" value="A=1-107"/>
</dbReference>
<dbReference type="PDBsum" id="1P1T"/>
<dbReference type="PDBsum" id="2J8P"/>
<dbReference type="PDBsum" id="6Q2I"/>
<dbReference type="PDBsum" id="6TZE"/>
<dbReference type="BMRB" id="P33240"/>
<dbReference type="EMDB" id="EMD-14185"/>
<dbReference type="SMR" id="P33240"/>
<dbReference type="BioGRID" id="107860">
    <property type="interactions" value="176"/>
</dbReference>
<dbReference type="ComplexPortal" id="CPX-2694">
    <property type="entry name" value="Histone pre-RNA core cleavage complex"/>
</dbReference>
<dbReference type="ComplexPortal" id="CPX-2701">
    <property type="entry name" value="Cleavage stimulation factor complex, CSTF2 variant"/>
</dbReference>
<dbReference type="CORUM" id="P33240"/>
<dbReference type="DIP" id="DIP-36129N"/>
<dbReference type="FunCoup" id="P33240">
    <property type="interactions" value="3027"/>
</dbReference>
<dbReference type="IntAct" id="P33240">
    <property type="interactions" value="81"/>
</dbReference>
<dbReference type="MINT" id="P33240"/>
<dbReference type="STRING" id="9606.ENSP00000387996"/>
<dbReference type="GlyGen" id="P33240">
    <property type="glycosylation" value="2 sites, 1 O-linked glycan (2 sites)"/>
</dbReference>
<dbReference type="iPTMnet" id="P33240"/>
<dbReference type="MetOSite" id="P33240"/>
<dbReference type="PhosphoSitePlus" id="P33240"/>
<dbReference type="SwissPalm" id="P33240"/>
<dbReference type="BioMuta" id="CSTF2"/>
<dbReference type="DMDM" id="461847"/>
<dbReference type="jPOST" id="P33240"/>
<dbReference type="MassIVE" id="P33240"/>
<dbReference type="PaxDb" id="9606-ENSP00000362063"/>
<dbReference type="PeptideAtlas" id="P33240"/>
<dbReference type="ProteomicsDB" id="54902">
    <molecule id="P33240-1"/>
</dbReference>
<dbReference type="ProteomicsDB" id="54903">
    <molecule id="P33240-2"/>
</dbReference>
<dbReference type="Pumba" id="P33240"/>
<dbReference type="Antibodypedia" id="411">
    <property type="antibodies" value="335 antibodies from 32 providers"/>
</dbReference>
<dbReference type="DNASU" id="1478"/>
<dbReference type="Ensembl" id="ENST00000372972.7">
    <molecule id="P33240-1"/>
    <property type="protein sequence ID" value="ENSP00000362063.2"/>
    <property type="gene ID" value="ENSG00000101811.15"/>
</dbReference>
<dbReference type="GeneID" id="1478"/>
<dbReference type="KEGG" id="hsa:1478"/>
<dbReference type="MANE-Select" id="ENST00000372972.7">
    <property type="protein sequence ID" value="ENSP00000362063.2"/>
    <property type="RefSeq nucleotide sequence ID" value="NM_001325.3"/>
    <property type="RefSeq protein sequence ID" value="NP_001316.1"/>
</dbReference>
<dbReference type="UCSC" id="uc004egh.4">
    <molecule id="P33240-1"/>
    <property type="organism name" value="human"/>
</dbReference>
<dbReference type="AGR" id="HGNC:2484"/>
<dbReference type="CTD" id="1478"/>
<dbReference type="DisGeNET" id="1478"/>
<dbReference type="GeneCards" id="CSTF2"/>
<dbReference type="HGNC" id="HGNC:2484">
    <property type="gene designation" value="CSTF2"/>
</dbReference>
<dbReference type="HPA" id="ENSG00000101811">
    <property type="expression patterns" value="Low tissue specificity"/>
</dbReference>
<dbReference type="MalaCards" id="CSTF2"/>
<dbReference type="MIM" id="300907">
    <property type="type" value="gene"/>
</dbReference>
<dbReference type="MIM" id="301116">
    <property type="type" value="phenotype"/>
</dbReference>
<dbReference type="neXtProt" id="NX_P33240"/>
<dbReference type="OpenTargets" id="ENSG00000101811"/>
<dbReference type="PharmGKB" id="PA26986"/>
<dbReference type="VEuPathDB" id="HostDB:ENSG00000101811"/>
<dbReference type="eggNOG" id="KOG0108">
    <property type="taxonomic scope" value="Eukaryota"/>
</dbReference>
<dbReference type="GeneTree" id="ENSGT00940000158987"/>
<dbReference type="InParanoid" id="P33240"/>
<dbReference type="OMA" id="NSQSMQM"/>
<dbReference type="OrthoDB" id="272703at2759"/>
<dbReference type="PAN-GO" id="P33240">
    <property type="GO annotations" value="3 GO annotations based on evolutionary models"/>
</dbReference>
<dbReference type="PhylomeDB" id="P33240"/>
<dbReference type="TreeFam" id="TF314948"/>
<dbReference type="PathwayCommons" id="P33240"/>
<dbReference type="Reactome" id="R-HSA-6784531">
    <property type="pathway name" value="tRNA processing in the nucleus"/>
</dbReference>
<dbReference type="Reactome" id="R-HSA-72187">
    <property type="pathway name" value="mRNA 3'-end processing"/>
</dbReference>
<dbReference type="Reactome" id="R-HSA-72203">
    <property type="pathway name" value="Processing of Capped Intron-Containing Pre-mRNA"/>
</dbReference>
<dbReference type="Reactome" id="R-HSA-73856">
    <property type="pathway name" value="RNA Polymerase II Transcription Termination"/>
</dbReference>
<dbReference type="Reactome" id="R-HSA-77595">
    <property type="pathway name" value="Processing of Intronless Pre-mRNAs"/>
</dbReference>
<dbReference type="SignaLink" id="P33240"/>
<dbReference type="SIGNOR" id="P33240"/>
<dbReference type="BioGRID-ORCS" id="1478">
    <property type="hits" value="37 hits in 778 CRISPR screens"/>
</dbReference>
<dbReference type="CD-CODE" id="5B6CCA73">
    <property type="entry name" value="DDX1 body"/>
</dbReference>
<dbReference type="CD-CODE" id="6F9FB6EF">
    <property type="entry name" value="Cleavage body"/>
</dbReference>
<dbReference type="CD-CODE" id="8E58DEA8">
    <property type="entry name" value="Synthetic Condensate 000081"/>
</dbReference>
<dbReference type="ChiTaRS" id="CSTF2">
    <property type="organism name" value="human"/>
</dbReference>
<dbReference type="EvolutionaryTrace" id="P33240"/>
<dbReference type="GeneWiki" id="CSTF2"/>
<dbReference type="GenomeRNAi" id="1478"/>
<dbReference type="Pharos" id="P33240">
    <property type="development level" value="Tbio"/>
</dbReference>
<dbReference type="PRO" id="PR:P33240"/>
<dbReference type="Proteomes" id="UP000005640">
    <property type="component" value="Chromosome X"/>
</dbReference>
<dbReference type="RNAct" id="P33240">
    <property type="molecule type" value="protein"/>
</dbReference>
<dbReference type="Bgee" id="ENSG00000101811">
    <property type="expression patterns" value="Expressed in oocyte and 172 other cell types or tissues"/>
</dbReference>
<dbReference type="ExpressionAtlas" id="P33240">
    <property type="expression patterns" value="baseline and differential"/>
</dbReference>
<dbReference type="GO" id="GO:0071920">
    <property type="term" value="C:cleavage body"/>
    <property type="evidence" value="ECO:0000314"/>
    <property type="project" value="UniProtKB"/>
</dbReference>
<dbReference type="GO" id="GO:0005847">
    <property type="term" value="C:mRNA cleavage and polyadenylation specificity factor complex"/>
    <property type="evidence" value="ECO:0000314"/>
    <property type="project" value="UniProtKB"/>
</dbReference>
<dbReference type="GO" id="GO:0016604">
    <property type="term" value="C:nuclear body"/>
    <property type="evidence" value="ECO:0000314"/>
    <property type="project" value="HPA"/>
</dbReference>
<dbReference type="GO" id="GO:0005654">
    <property type="term" value="C:nucleoplasm"/>
    <property type="evidence" value="ECO:0000314"/>
    <property type="project" value="HPA"/>
</dbReference>
<dbReference type="GO" id="GO:0005634">
    <property type="term" value="C:nucleus"/>
    <property type="evidence" value="ECO:0000315"/>
    <property type="project" value="UniProtKB"/>
</dbReference>
<dbReference type="GO" id="GO:0003729">
    <property type="term" value="F:mRNA binding"/>
    <property type="evidence" value="ECO:0000318"/>
    <property type="project" value="GO_Central"/>
</dbReference>
<dbReference type="GO" id="GO:0003723">
    <property type="term" value="F:RNA binding"/>
    <property type="evidence" value="ECO:0000314"/>
    <property type="project" value="GO_Central"/>
</dbReference>
<dbReference type="GO" id="GO:1990090">
    <property type="term" value="P:cellular response to nerve growth factor stimulus"/>
    <property type="evidence" value="ECO:0007669"/>
    <property type="project" value="Ensembl"/>
</dbReference>
<dbReference type="GO" id="GO:0031124">
    <property type="term" value="P:mRNA 3'-end processing"/>
    <property type="evidence" value="ECO:0000315"/>
    <property type="project" value="UniProtKB"/>
</dbReference>
<dbReference type="CDD" id="cd12671">
    <property type="entry name" value="RRM_CSTF2_CSTF2T"/>
    <property type="match status" value="1"/>
</dbReference>
<dbReference type="FunFam" id="1.10.20.70:FF:000001">
    <property type="entry name" value="Cleavage stimulation factor subunit 2"/>
    <property type="match status" value="1"/>
</dbReference>
<dbReference type="FunFam" id="1.25.40.630:FF:000001">
    <property type="entry name" value="Cleavage stimulation factor subunit 2"/>
    <property type="match status" value="1"/>
</dbReference>
<dbReference type="FunFam" id="3.30.70.330:FF:000061">
    <property type="entry name" value="cleavage stimulation factor subunit 2 isoform X1"/>
    <property type="match status" value="1"/>
</dbReference>
<dbReference type="Gene3D" id="1.25.40.630">
    <property type="match status" value="1"/>
</dbReference>
<dbReference type="Gene3D" id="3.30.70.330">
    <property type="match status" value="1"/>
</dbReference>
<dbReference type="Gene3D" id="1.10.20.70">
    <property type="entry name" value="Transcription termination and cleavage factor, C-terminal domain"/>
    <property type="match status" value="1"/>
</dbReference>
<dbReference type="InterPro" id="IPR025742">
    <property type="entry name" value="CSTF2_hinge"/>
</dbReference>
<dbReference type="InterPro" id="IPR026896">
    <property type="entry name" value="CSTF_C"/>
</dbReference>
<dbReference type="InterPro" id="IPR038192">
    <property type="entry name" value="CSTF_C_sf"/>
</dbReference>
<dbReference type="InterPro" id="IPR012677">
    <property type="entry name" value="Nucleotide-bd_a/b_plait_sf"/>
</dbReference>
<dbReference type="InterPro" id="IPR035979">
    <property type="entry name" value="RBD_domain_sf"/>
</dbReference>
<dbReference type="InterPro" id="IPR000504">
    <property type="entry name" value="RRM_dom"/>
</dbReference>
<dbReference type="PANTHER" id="PTHR45735">
    <property type="entry name" value="CLEAVAGE STIMULATION FACTOR SUBUNIT 2"/>
    <property type="match status" value="1"/>
</dbReference>
<dbReference type="PANTHER" id="PTHR45735:SF6">
    <property type="entry name" value="CLEAVAGE STIMULATION FACTOR SUBUNIT 2"/>
    <property type="match status" value="1"/>
</dbReference>
<dbReference type="Pfam" id="PF14327">
    <property type="entry name" value="CSTF2_hinge"/>
    <property type="match status" value="1"/>
</dbReference>
<dbReference type="Pfam" id="PF14304">
    <property type="entry name" value="CSTF_C"/>
    <property type="match status" value="1"/>
</dbReference>
<dbReference type="Pfam" id="PF00076">
    <property type="entry name" value="RRM_1"/>
    <property type="match status" value="1"/>
</dbReference>
<dbReference type="SMART" id="SM00360">
    <property type="entry name" value="RRM"/>
    <property type="match status" value="1"/>
</dbReference>
<dbReference type="SUPFAM" id="SSF54928">
    <property type="entry name" value="RNA-binding domain, RBD"/>
    <property type="match status" value="1"/>
</dbReference>
<dbReference type="PROSITE" id="PS50102">
    <property type="entry name" value="RRM"/>
    <property type="match status" value="1"/>
</dbReference>
<proteinExistence type="evidence at protein level"/>
<keyword id="KW-0002">3D-structure</keyword>
<keyword id="KW-0025">Alternative splicing</keyword>
<keyword id="KW-0225">Disease variant</keyword>
<keyword id="KW-0991">Intellectual disability</keyword>
<keyword id="KW-1017">Isopeptide bond</keyword>
<keyword id="KW-0488">Methylation</keyword>
<keyword id="KW-0507">mRNA processing</keyword>
<keyword id="KW-0539">Nucleus</keyword>
<keyword id="KW-0597">Phosphoprotein</keyword>
<keyword id="KW-1267">Proteomics identification</keyword>
<keyword id="KW-1185">Reference proteome</keyword>
<keyword id="KW-0677">Repeat</keyword>
<keyword id="KW-0694">RNA-binding</keyword>
<keyword id="KW-0832">Ubl conjugation</keyword>
<reference key="1">
    <citation type="journal article" date="1992" name="Proc. Natl. Acad. Sci. U.S.A.">
        <title>The human 64-kDa polyadenylylation factor contains a ribonucleoprotein-type RNA binding domain and unusual auxiliary motifs.</title>
        <authorList>
            <person name="Takagaki Y."/>
            <person name="Macdonald C.C."/>
            <person name="Shenk T."/>
            <person name="Manley J.L."/>
        </authorList>
    </citation>
    <scope>NUCLEOTIDE SEQUENCE [MRNA] (ISOFORM 1)</scope>
    <scope>PHOSPHORYLATION</scope>
    <scope>RNA-BINDING</scope>
</reference>
<reference key="2">
    <citation type="submission" date="2003-08" db="EMBL/GenBank/DDBJ databases">
        <title>Cloning of human full-length CDSs in BD Creator(TM) system donor vector.</title>
        <authorList>
            <person name="Kalnine N."/>
            <person name="Chen X."/>
            <person name="Rolfs A."/>
            <person name="Halleck A."/>
            <person name="Hines L."/>
            <person name="Eisenstein S."/>
            <person name="Koundinya M."/>
            <person name="Raphael J."/>
            <person name="Moreira D."/>
            <person name="Kelley T."/>
            <person name="LaBaer J."/>
            <person name="Lin Y."/>
            <person name="Phelan M."/>
            <person name="Farmer A."/>
        </authorList>
    </citation>
    <scope>NUCLEOTIDE SEQUENCE [LARGE SCALE MRNA] (ISOFORM 1)</scope>
</reference>
<reference key="3">
    <citation type="journal article" date="2005" name="Nature">
        <title>The DNA sequence of the human X chromosome.</title>
        <authorList>
            <person name="Ross M.T."/>
            <person name="Grafham D.V."/>
            <person name="Coffey A.J."/>
            <person name="Scherer S."/>
            <person name="McLay K."/>
            <person name="Muzny D."/>
            <person name="Platzer M."/>
            <person name="Howell G.R."/>
            <person name="Burrows C."/>
            <person name="Bird C.P."/>
            <person name="Frankish A."/>
            <person name="Lovell F.L."/>
            <person name="Howe K.L."/>
            <person name="Ashurst J.L."/>
            <person name="Fulton R.S."/>
            <person name="Sudbrak R."/>
            <person name="Wen G."/>
            <person name="Jones M.C."/>
            <person name="Hurles M.E."/>
            <person name="Andrews T.D."/>
            <person name="Scott C.E."/>
            <person name="Searle S."/>
            <person name="Ramser J."/>
            <person name="Whittaker A."/>
            <person name="Deadman R."/>
            <person name="Carter N.P."/>
            <person name="Hunt S.E."/>
            <person name="Chen R."/>
            <person name="Cree A."/>
            <person name="Gunaratne P."/>
            <person name="Havlak P."/>
            <person name="Hodgson A."/>
            <person name="Metzker M.L."/>
            <person name="Richards S."/>
            <person name="Scott G."/>
            <person name="Steffen D."/>
            <person name="Sodergren E."/>
            <person name="Wheeler D.A."/>
            <person name="Worley K.C."/>
            <person name="Ainscough R."/>
            <person name="Ambrose K.D."/>
            <person name="Ansari-Lari M.A."/>
            <person name="Aradhya S."/>
            <person name="Ashwell R.I."/>
            <person name="Babbage A.K."/>
            <person name="Bagguley C.L."/>
            <person name="Ballabio A."/>
            <person name="Banerjee R."/>
            <person name="Barker G.E."/>
            <person name="Barlow K.F."/>
            <person name="Barrett I.P."/>
            <person name="Bates K.N."/>
            <person name="Beare D.M."/>
            <person name="Beasley H."/>
            <person name="Beasley O."/>
            <person name="Beck A."/>
            <person name="Bethel G."/>
            <person name="Blechschmidt K."/>
            <person name="Brady N."/>
            <person name="Bray-Allen S."/>
            <person name="Bridgeman A.M."/>
            <person name="Brown A.J."/>
            <person name="Brown M.J."/>
            <person name="Bonnin D."/>
            <person name="Bruford E.A."/>
            <person name="Buhay C."/>
            <person name="Burch P."/>
            <person name="Burford D."/>
            <person name="Burgess J."/>
            <person name="Burrill W."/>
            <person name="Burton J."/>
            <person name="Bye J.M."/>
            <person name="Carder C."/>
            <person name="Carrel L."/>
            <person name="Chako J."/>
            <person name="Chapman J.C."/>
            <person name="Chavez D."/>
            <person name="Chen E."/>
            <person name="Chen G."/>
            <person name="Chen Y."/>
            <person name="Chen Z."/>
            <person name="Chinault C."/>
            <person name="Ciccodicola A."/>
            <person name="Clark S.Y."/>
            <person name="Clarke G."/>
            <person name="Clee C.M."/>
            <person name="Clegg S."/>
            <person name="Clerc-Blankenburg K."/>
            <person name="Clifford K."/>
            <person name="Cobley V."/>
            <person name="Cole C.G."/>
            <person name="Conquer J.S."/>
            <person name="Corby N."/>
            <person name="Connor R.E."/>
            <person name="David R."/>
            <person name="Davies J."/>
            <person name="Davis C."/>
            <person name="Davis J."/>
            <person name="Delgado O."/>
            <person name="Deshazo D."/>
            <person name="Dhami P."/>
            <person name="Ding Y."/>
            <person name="Dinh H."/>
            <person name="Dodsworth S."/>
            <person name="Draper H."/>
            <person name="Dugan-Rocha S."/>
            <person name="Dunham A."/>
            <person name="Dunn M."/>
            <person name="Durbin K.J."/>
            <person name="Dutta I."/>
            <person name="Eades T."/>
            <person name="Ellwood M."/>
            <person name="Emery-Cohen A."/>
            <person name="Errington H."/>
            <person name="Evans K.L."/>
            <person name="Faulkner L."/>
            <person name="Francis F."/>
            <person name="Frankland J."/>
            <person name="Fraser A.E."/>
            <person name="Galgoczy P."/>
            <person name="Gilbert J."/>
            <person name="Gill R."/>
            <person name="Gloeckner G."/>
            <person name="Gregory S.G."/>
            <person name="Gribble S."/>
            <person name="Griffiths C."/>
            <person name="Grocock R."/>
            <person name="Gu Y."/>
            <person name="Gwilliam R."/>
            <person name="Hamilton C."/>
            <person name="Hart E.A."/>
            <person name="Hawes A."/>
            <person name="Heath P.D."/>
            <person name="Heitmann K."/>
            <person name="Hennig S."/>
            <person name="Hernandez J."/>
            <person name="Hinzmann B."/>
            <person name="Ho S."/>
            <person name="Hoffs M."/>
            <person name="Howden P.J."/>
            <person name="Huckle E.J."/>
            <person name="Hume J."/>
            <person name="Hunt P.J."/>
            <person name="Hunt A.R."/>
            <person name="Isherwood J."/>
            <person name="Jacob L."/>
            <person name="Johnson D."/>
            <person name="Jones S."/>
            <person name="de Jong P.J."/>
            <person name="Joseph S.S."/>
            <person name="Keenan S."/>
            <person name="Kelly S."/>
            <person name="Kershaw J.K."/>
            <person name="Khan Z."/>
            <person name="Kioschis P."/>
            <person name="Klages S."/>
            <person name="Knights A.J."/>
            <person name="Kosiura A."/>
            <person name="Kovar-Smith C."/>
            <person name="Laird G.K."/>
            <person name="Langford C."/>
            <person name="Lawlor S."/>
            <person name="Leversha M."/>
            <person name="Lewis L."/>
            <person name="Liu W."/>
            <person name="Lloyd C."/>
            <person name="Lloyd D.M."/>
            <person name="Loulseged H."/>
            <person name="Loveland J.E."/>
            <person name="Lovell J.D."/>
            <person name="Lozado R."/>
            <person name="Lu J."/>
            <person name="Lyne R."/>
            <person name="Ma J."/>
            <person name="Maheshwari M."/>
            <person name="Matthews L.H."/>
            <person name="McDowall J."/>
            <person name="McLaren S."/>
            <person name="McMurray A."/>
            <person name="Meidl P."/>
            <person name="Meitinger T."/>
            <person name="Milne S."/>
            <person name="Miner G."/>
            <person name="Mistry S.L."/>
            <person name="Morgan M."/>
            <person name="Morris S."/>
            <person name="Mueller I."/>
            <person name="Mullikin J.C."/>
            <person name="Nguyen N."/>
            <person name="Nordsiek G."/>
            <person name="Nyakatura G."/>
            <person name="O'dell C.N."/>
            <person name="Okwuonu G."/>
            <person name="Palmer S."/>
            <person name="Pandian R."/>
            <person name="Parker D."/>
            <person name="Parrish J."/>
            <person name="Pasternak S."/>
            <person name="Patel D."/>
            <person name="Pearce A.V."/>
            <person name="Pearson D.M."/>
            <person name="Pelan S.E."/>
            <person name="Perez L."/>
            <person name="Porter K.M."/>
            <person name="Ramsey Y."/>
            <person name="Reichwald K."/>
            <person name="Rhodes S."/>
            <person name="Ridler K.A."/>
            <person name="Schlessinger D."/>
            <person name="Schueler M.G."/>
            <person name="Sehra H.K."/>
            <person name="Shaw-Smith C."/>
            <person name="Shen H."/>
            <person name="Sheridan E.M."/>
            <person name="Shownkeen R."/>
            <person name="Skuce C.D."/>
            <person name="Smith M.L."/>
            <person name="Sotheran E.C."/>
            <person name="Steingruber H.E."/>
            <person name="Steward C.A."/>
            <person name="Storey R."/>
            <person name="Swann R.M."/>
            <person name="Swarbreck D."/>
            <person name="Tabor P.E."/>
            <person name="Taudien S."/>
            <person name="Taylor T."/>
            <person name="Teague B."/>
            <person name="Thomas K."/>
            <person name="Thorpe A."/>
            <person name="Timms K."/>
            <person name="Tracey A."/>
            <person name="Trevanion S."/>
            <person name="Tromans A.C."/>
            <person name="d'Urso M."/>
            <person name="Verduzco D."/>
            <person name="Villasana D."/>
            <person name="Waldron L."/>
            <person name="Wall M."/>
            <person name="Wang Q."/>
            <person name="Warren J."/>
            <person name="Warry G.L."/>
            <person name="Wei X."/>
            <person name="West A."/>
            <person name="Whitehead S.L."/>
            <person name="Whiteley M.N."/>
            <person name="Wilkinson J.E."/>
            <person name="Willey D.L."/>
            <person name="Williams G."/>
            <person name="Williams L."/>
            <person name="Williamson A."/>
            <person name="Williamson H."/>
            <person name="Wilming L."/>
            <person name="Woodmansey R.L."/>
            <person name="Wray P.W."/>
            <person name="Yen J."/>
            <person name="Zhang J."/>
            <person name="Zhou J."/>
            <person name="Zoghbi H."/>
            <person name="Zorilla S."/>
            <person name="Buck D."/>
            <person name="Reinhardt R."/>
            <person name="Poustka A."/>
            <person name="Rosenthal A."/>
            <person name="Lehrach H."/>
            <person name="Meindl A."/>
            <person name="Minx P.J."/>
            <person name="Hillier L.W."/>
            <person name="Willard H.F."/>
            <person name="Wilson R.K."/>
            <person name="Waterston R.H."/>
            <person name="Rice C.M."/>
            <person name="Vaudin M."/>
            <person name="Coulson A."/>
            <person name="Nelson D.L."/>
            <person name="Weinstock G."/>
            <person name="Sulston J.E."/>
            <person name="Durbin R.M."/>
            <person name="Hubbard T."/>
            <person name="Gibbs R.A."/>
            <person name="Beck S."/>
            <person name="Rogers J."/>
            <person name="Bentley D.R."/>
        </authorList>
    </citation>
    <scope>NUCLEOTIDE SEQUENCE [LARGE SCALE GENOMIC DNA]</scope>
</reference>
<reference key="4">
    <citation type="journal article" date="2004" name="Genome Res.">
        <title>The status, quality, and expansion of the NIH full-length cDNA project: the Mammalian Gene Collection (MGC).</title>
        <authorList>
            <consortium name="The MGC Project Team"/>
        </authorList>
    </citation>
    <scope>NUCLEOTIDE SEQUENCE [LARGE SCALE MRNA] (ISOFORMS 1 AND 2)</scope>
    <source>
        <tissue>Kidney</tissue>
        <tissue>Ovary</tissue>
    </source>
</reference>
<reference key="5">
    <citation type="journal article" date="1997" name="Mol. Cell. Biol.">
        <title>RNA recognition by the human polyadenylation factor CstF.</title>
        <authorList>
            <person name="Takagaki Y."/>
            <person name="Manley J.L."/>
        </authorList>
    </citation>
    <scope>RNA-BINDING</scope>
    <scope>FUNCTION</scope>
</reference>
<reference key="6">
    <citation type="journal article" date="1998" name="Proc. Natl. Acad. Sci. U.S.A.">
        <title>Increase in the 64-kDa subunit of the polyadenylation/cleavage stimulatory factor during the G0 to S phase transition.</title>
        <authorList>
            <person name="Martincic K."/>
            <person name="Campbell R."/>
            <person name="Edwalds-Gilbert G."/>
            <person name="Souan L."/>
            <person name="Lotze M.T."/>
            <person name="Milcarek C."/>
        </authorList>
    </citation>
    <scope>INDUCTION</scope>
</reference>
<reference key="7">
    <citation type="journal article" date="2000" name="Mol. Cell. Biol.">
        <title>Complex protein interactions within the human polyadenylation machinery identify a novel component.</title>
        <authorList>
            <person name="Takagaki Y."/>
            <person name="Manley J.L."/>
        </authorList>
    </citation>
    <scope>INTERACTION WITH CSTF3 AND SYMPK</scope>
</reference>
<reference key="8">
    <citation type="journal article" date="2001" name="Mol. Cell">
        <title>Evolutionarily conserved interaction between CstF-64 and PC4 links transcription, polyadenylation, and termination.</title>
        <authorList>
            <person name="Calvo O."/>
            <person name="Manley J.L."/>
        </authorList>
    </citation>
    <scope>INTERACTION WITH RPO2TC1</scope>
</reference>
<reference key="9">
    <citation type="journal article" date="2001" name="Mol. Biol. Cell">
        <title>Association of human DEAD box protein DDX1 with a cleavage stimulation factor involved in 3'-end processing of pre-MRNA.</title>
        <authorList>
            <person name="Bleoo S."/>
            <person name="Sun X."/>
            <person name="Hendzel M.J."/>
            <person name="Rowe J.M."/>
            <person name="Packer M."/>
            <person name="Godbout R."/>
        </authorList>
    </citation>
    <scope>INTERACTION WITH DDX1</scope>
    <scope>SUBCELLULAR LOCATION</scope>
</reference>
<reference key="10">
    <citation type="journal article" date="2004" name="EMBO J.">
        <title>Human Fip1 is a subunit of CPSF that binds to U-rich RNA elements and stimulates poly(A) polymerase.</title>
        <authorList>
            <person name="Kaufmann I."/>
            <person name="Martin G."/>
            <person name="Friedlein A."/>
            <person name="Langen H."/>
            <person name="Keller W."/>
        </authorList>
    </citation>
    <scope>INTERACTION WITH FIP1L1</scope>
</reference>
<reference key="11">
    <citation type="journal article" date="2004" name="J. Biol. Chem.">
        <title>HSF1 modulation of Hsp70 mRNA polyadenylation via interaction with symplekin.</title>
        <authorList>
            <person name="Xing H."/>
            <person name="Mayhew C.N."/>
            <person name="Cullen K.E."/>
            <person name="Park-Sarge O.-K."/>
            <person name="Sarge K.D."/>
        </authorList>
    </citation>
    <scope>INTERACTION WITH HSF1</scope>
</reference>
<reference key="12">
    <citation type="journal article" date="2007" name="Science">
        <title>ATM and ATR substrate analysis reveals extensive protein networks responsive to DNA damage.</title>
        <authorList>
            <person name="Matsuoka S."/>
            <person name="Ballif B.A."/>
            <person name="Smogorzewska A."/>
            <person name="McDonald E.R. III"/>
            <person name="Hurov K.E."/>
            <person name="Luo J."/>
            <person name="Bakalarski C.E."/>
            <person name="Zhao Z."/>
            <person name="Solimini N."/>
            <person name="Lerenthal Y."/>
            <person name="Shiloh Y."/>
            <person name="Gygi S.P."/>
            <person name="Elledge S.J."/>
        </authorList>
    </citation>
    <scope>PHOSPHORYLATION [LARGE SCALE ANALYSIS] AT SER-518</scope>
    <scope>IDENTIFICATION BY MASS SPECTROMETRY [LARGE SCALE ANALYSIS]</scope>
    <source>
        <tissue>Embryonic kidney</tissue>
    </source>
</reference>
<reference key="13">
    <citation type="journal article" date="2008" name="EMBO Rep.">
        <title>Conserved motifs in both CPSF73 and CPSF100 are required to assemble the active endonuclease for histone mRNA 3'-end maturation.</title>
        <authorList>
            <person name="Kolev N.G."/>
            <person name="Yario T.A."/>
            <person name="Benson E."/>
            <person name="Steitz J.A."/>
        </authorList>
    </citation>
    <scope>INTERACTION WITH CPSF2 AND CPSF3</scope>
</reference>
<reference key="14">
    <citation type="journal article" date="2008" name="Proc. Natl. Acad. Sci. U.S.A.">
        <title>A quantitative atlas of mitotic phosphorylation.</title>
        <authorList>
            <person name="Dephoure N."/>
            <person name="Zhou C."/>
            <person name="Villen J."/>
            <person name="Beausoleil S.A."/>
            <person name="Bakalarski C.E."/>
            <person name="Elledge S.J."/>
            <person name="Gygi S.P."/>
        </authorList>
    </citation>
    <scope>PHOSPHORYLATION [LARGE SCALE ANALYSIS] AT SER-524</scope>
    <scope>IDENTIFICATION BY MASS SPECTROMETRY [LARGE SCALE ANALYSIS]</scope>
    <source>
        <tissue>Cervix carcinoma</tissue>
    </source>
</reference>
<reference key="15">
    <citation type="journal article" date="2009" name="Sci. Signal.">
        <title>Quantitative phosphoproteomic analysis of T cell receptor signaling reveals system-wide modulation of protein-protein interactions.</title>
        <authorList>
            <person name="Mayya V."/>
            <person name="Lundgren D.H."/>
            <person name="Hwang S.-I."/>
            <person name="Rezaul K."/>
            <person name="Wu L."/>
            <person name="Eng J.K."/>
            <person name="Rodionov V."/>
            <person name="Han D.K."/>
        </authorList>
    </citation>
    <scope>PHOSPHORYLATION [LARGE SCALE ANALYSIS] AT SER-524</scope>
    <scope>IDENTIFICATION BY MASS SPECTROMETRY [LARGE SCALE ANALYSIS]</scope>
    <source>
        <tissue>Leukemic T-cell</tissue>
    </source>
</reference>
<reference key="16">
    <citation type="journal article" date="2010" name="EMBO J.">
        <title>The poly A polymerase Star-PAP controls 3'-end cleavage by promoting CPSF interaction and specificity toward the pre-mRNA.</title>
        <authorList>
            <person name="Laishram R.S."/>
            <person name="Anderson R.A."/>
        </authorList>
    </citation>
    <scope>IDENTIFICATION IN THE CPSF COMPLEX</scope>
</reference>
<reference key="17">
    <citation type="journal article" date="2010" name="Sci. Signal.">
        <title>Quantitative phosphoproteomics reveals widespread full phosphorylation site occupancy during mitosis.</title>
        <authorList>
            <person name="Olsen J.V."/>
            <person name="Vermeulen M."/>
            <person name="Santamaria A."/>
            <person name="Kumar C."/>
            <person name="Miller M.L."/>
            <person name="Jensen L.J."/>
            <person name="Gnad F."/>
            <person name="Cox J."/>
            <person name="Jensen T.S."/>
            <person name="Nigg E.A."/>
            <person name="Brunak S."/>
            <person name="Mann M."/>
        </authorList>
    </citation>
    <scope>IDENTIFICATION BY MASS SPECTROMETRY [LARGE SCALE ANALYSIS]</scope>
    <source>
        <tissue>Cervix carcinoma</tissue>
    </source>
</reference>
<reference key="18">
    <citation type="journal article" date="2011" name="BMC Syst. Biol.">
        <title>Initial characterization of the human central proteome.</title>
        <authorList>
            <person name="Burkard T.R."/>
            <person name="Planyavsky M."/>
            <person name="Kaupe I."/>
            <person name="Breitwieser F.P."/>
            <person name="Buerckstuemmer T."/>
            <person name="Bennett K.L."/>
            <person name="Superti-Furga G."/>
            <person name="Colinge J."/>
        </authorList>
    </citation>
    <scope>IDENTIFICATION BY MASS SPECTROMETRY [LARGE SCALE ANALYSIS]</scope>
</reference>
<reference key="19">
    <citation type="journal article" date="2011" name="Sci. Signal.">
        <title>System-wide temporal characterization of the proteome and phosphoproteome of human embryonic stem cell differentiation.</title>
        <authorList>
            <person name="Rigbolt K.T."/>
            <person name="Prokhorova T.A."/>
            <person name="Akimov V."/>
            <person name="Henningsen J."/>
            <person name="Johansen P.T."/>
            <person name="Kratchmarova I."/>
            <person name="Kassem M."/>
            <person name="Mann M."/>
            <person name="Olsen J.V."/>
            <person name="Blagoev B."/>
        </authorList>
    </citation>
    <scope>IDENTIFICATION BY MASS SPECTROMETRY [LARGE SCALE ANALYSIS]</scope>
</reference>
<reference key="20">
    <citation type="journal article" date="2013" name="J. Proteome Res.">
        <title>Toward a comprehensive characterization of a human cancer cell phosphoproteome.</title>
        <authorList>
            <person name="Zhou H."/>
            <person name="Di Palma S."/>
            <person name="Preisinger C."/>
            <person name="Peng M."/>
            <person name="Polat A.N."/>
            <person name="Heck A.J."/>
            <person name="Mohammed S."/>
        </authorList>
    </citation>
    <scope>PHOSPHORYLATION [LARGE SCALE ANALYSIS] AT SER-14</scope>
    <scope>IDENTIFICATION BY MASS SPECTROMETRY [LARGE SCALE ANALYSIS]</scope>
    <source>
        <tissue>Erythroleukemia</tissue>
    </source>
</reference>
<reference key="21">
    <citation type="journal article" date="2014" name="Mol. Cell. Proteomics">
        <title>Immunoaffinity enrichment and mass spectrometry analysis of protein methylation.</title>
        <authorList>
            <person name="Guo A."/>
            <person name="Gu H."/>
            <person name="Zhou J."/>
            <person name="Mulhern D."/>
            <person name="Wang Y."/>
            <person name="Lee K.A."/>
            <person name="Yang V."/>
            <person name="Aguiar M."/>
            <person name="Kornhauser J."/>
            <person name="Jia X."/>
            <person name="Ren J."/>
            <person name="Beausoleil S.A."/>
            <person name="Silva J.C."/>
            <person name="Vemulapalli V."/>
            <person name="Bedford M.T."/>
            <person name="Comb M.J."/>
        </authorList>
    </citation>
    <scope>METHYLATION [LARGE SCALE ANALYSIS] AT ARG-308; ARG-468 AND ARG-475</scope>
    <scope>IDENTIFICATION BY MASS SPECTROMETRY [LARGE SCALE ANALYSIS]</scope>
    <source>
        <tissue>Colon carcinoma</tissue>
    </source>
</reference>
<reference key="22">
    <citation type="journal article" date="2015" name="Mol. Cell. Proteomics">
        <title>System-wide analysis of SUMOylation dynamics in response to replication stress reveals novel small ubiquitin-like modified target proteins and acceptor lysines relevant for genome stability.</title>
        <authorList>
            <person name="Xiao Z."/>
            <person name="Chang J.G."/>
            <person name="Hendriks I.A."/>
            <person name="Sigurdsson J.O."/>
            <person name="Olsen J.V."/>
            <person name="Vertegaal A.C."/>
        </authorList>
    </citation>
    <scope>SUMOYLATION [LARGE SCALE ANALYSIS] AT LYS-189</scope>
    <scope>IDENTIFICATION BY MASS SPECTROMETRY [LARGE SCALE ANALYSIS]</scope>
</reference>
<reference key="23">
    <citation type="journal article" date="2017" name="Nat. Struct. Mol. Biol.">
        <title>Site-specific mapping of the human SUMO proteome reveals co-modification with phosphorylation.</title>
        <authorList>
            <person name="Hendriks I.A."/>
            <person name="Lyon D."/>
            <person name="Young C."/>
            <person name="Jensen L.J."/>
            <person name="Vertegaal A.C."/>
            <person name="Nielsen M.L."/>
        </authorList>
    </citation>
    <scope>SUMOYLATION [LARGE SCALE ANALYSIS] AT LYS-189</scope>
    <scope>IDENTIFICATION BY MASS SPECTROMETRY [LARGE SCALE ANALYSIS]</scope>
</reference>
<reference key="24">
    <citation type="journal article" date="2020" name="Nucleic Acids Res.">
        <title>A missense mutation in the CSTF2 gene that impairs the function of the RNA recognition motif and causes defects in 3' end processing is associated with intellectual disability in humans.</title>
        <authorList>
            <person name="Grozdanov P.N."/>
            <person name="Masoumzadeh E."/>
            <person name="Kalscheuer V.M."/>
            <person name="Bienvenu T."/>
            <person name="Billuart P."/>
            <person name="Delrue M.A."/>
            <person name="Latham M.P."/>
            <person name="MacDonald C.C."/>
        </authorList>
    </citation>
    <scope>INVOLVEMENT IN XLID113</scope>
    <scope>VARIANT XLID113 ALA-50</scope>
    <scope>CHARACTERIZATION OF VARIANT XLID113 ALA-50</scope>
    <scope>FUNCTION</scope>
    <scope>SUBCELLULAR LOCATION</scope>
</reference>
<reference key="25">
    <citation type="journal article" date="2003" name="EMBO J.">
        <title>Recognition of GU-rich polyadenylation regulatory elements by human CstF-64 protein.</title>
        <authorList>
            <person name="Perez Canadillas J.M."/>
            <person name="Varani G."/>
        </authorList>
    </citation>
    <scope>STRUCTURE BY NMR OF 8-111</scope>
</reference>
<reference key="26">
    <citation type="journal article" date="2007" name="J. Biol. Chem.">
        <title>The C-terminal domains of vertebrate CstF-64 and its yeast orthologue Rna15 form a new structure critical for mRNA 3'-end processing.</title>
        <authorList>
            <person name="Qu X."/>
            <person name="Perez-Canadillas J.M."/>
            <person name="Agrawal S."/>
            <person name="De Baecke J."/>
            <person name="Cheng H."/>
            <person name="Varani G."/>
            <person name="Moore C."/>
        </authorList>
    </citation>
    <scope>STRUCTURE BY NMR OF 531-577</scope>
</reference>
<feature type="chain" id="PRO_0000081531" description="Cleavage stimulation factor subunit 2">
    <location>
        <begin position="1"/>
        <end position="577"/>
    </location>
</feature>
<feature type="domain" description="RRM" evidence="1">
    <location>
        <begin position="16"/>
        <end position="94"/>
    </location>
</feature>
<feature type="repeat" description="1; approximate">
    <location>
        <begin position="410"/>
        <end position="414"/>
    </location>
</feature>
<feature type="repeat" description="2">
    <location>
        <begin position="415"/>
        <end position="419"/>
    </location>
</feature>
<feature type="repeat" description="3">
    <location>
        <begin position="420"/>
        <end position="424"/>
    </location>
</feature>
<feature type="repeat" description="4; approximate">
    <location>
        <begin position="425"/>
        <end position="429"/>
    </location>
</feature>
<feature type="repeat" description="5; approximate">
    <location>
        <begin position="430"/>
        <end position="434"/>
    </location>
</feature>
<feature type="repeat" description="6">
    <location>
        <begin position="435"/>
        <end position="439"/>
    </location>
</feature>
<feature type="repeat" description="7">
    <location>
        <begin position="440"/>
        <end position="444"/>
    </location>
</feature>
<feature type="repeat" description="8">
    <location>
        <begin position="445"/>
        <end position="449"/>
    </location>
</feature>
<feature type="repeat" description="9">
    <location>
        <begin position="450"/>
        <end position="454"/>
    </location>
</feature>
<feature type="repeat" description="10; approximate">
    <location>
        <begin position="455"/>
        <end position="459"/>
    </location>
</feature>
<feature type="repeat" description="11">
    <location>
        <begin position="460"/>
        <end position="464"/>
    </location>
</feature>
<feature type="repeat" description="12; approximate">
    <location>
        <begin position="465"/>
        <end position="469"/>
    </location>
</feature>
<feature type="region of interest" description="Interactions with CSTF3 and SYMPK">
    <location>
        <begin position="108"/>
        <end position="248"/>
    </location>
</feature>
<feature type="region of interest" description="Disordered" evidence="2">
    <location>
        <begin position="206"/>
        <end position="243"/>
    </location>
</feature>
<feature type="region of interest" description="Disordered" evidence="2">
    <location>
        <begin position="340"/>
        <end position="409"/>
    </location>
</feature>
<feature type="region of interest" description="12 X 5 AA tandem repeats of M-E-A-R-[AG]">
    <location>
        <begin position="410"/>
        <end position="469"/>
    </location>
</feature>
<feature type="region of interest" description="Disordered" evidence="2">
    <location>
        <begin position="508"/>
        <end position="532"/>
    </location>
</feature>
<feature type="region of interest" description="Interaction with RPO2TC1" evidence="4">
    <location>
        <begin position="514"/>
        <end position="577"/>
    </location>
</feature>
<feature type="compositionally biased region" description="Low complexity" evidence="2">
    <location>
        <begin position="222"/>
        <end position="232"/>
    </location>
</feature>
<feature type="compositionally biased region" description="Basic and acidic residues" evidence="2">
    <location>
        <begin position="360"/>
        <end position="373"/>
    </location>
</feature>
<feature type="modified residue" description="Phosphoserine" evidence="17">
    <location>
        <position position="14"/>
    </location>
</feature>
<feature type="modified residue" description="Omega-N-methylarginine" evidence="18">
    <location>
        <position position="308"/>
    </location>
</feature>
<feature type="modified residue" description="Omega-N-methylarginine" evidence="18">
    <location>
        <position position="468"/>
    </location>
</feature>
<feature type="modified residue" description="Omega-N-methylarginine" evidence="18">
    <location>
        <position position="475"/>
    </location>
</feature>
<feature type="modified residue" description="Phosphoserine" evidence="14">
    <location>
        <position position="518"/>
    </location>
</feature>
<feature type="modified residue" description="Phosphoserine" evidence="15 16">
    <location>
        <position position="524"/>
    </location>
</feature>
<feature type="cross-link" description="Glycyl lysine isopeptide (Lys-Gly) (interchain with G-Cter in SUMO2)" evidence="19 20">
    <location>
        <position position="189"/>
    </location>
</feature>
<feature type="splice variant" id="VSP_014841" description="In isoform 2." evidence="13">
    <location>
        <begin position="235"/>
        <end position="251"/>
    </location>
</feature>
<feature type="sequence variant" id="VAR_089352" description="In XLID113; likely pathogenic; decreased mRNA 3'-end processing; increased RNA binding affinity; localized more in the cytoplasm than wild type; the orthologous mouse mutation results in altered polyadenylation and 3'-end cleavage of pre-mRNAs critical for brain development." evidence="10">
    <original>D</original>
    <variation>A</variation>
    <location>
        <position position="50"/>
    </location>
</feature>
<feature type="helix" evidence="21">
    <location>
        <begin position="12"/>
        <end position="15"/>
    </location>
</feature>
<feature type="strand" evidence="21">
    <location>
        <begin position="18"/>
        <end position="22"/>
    </location>
</feature>
<feature type="strand" evidence="23">
    <location>
        <begin position="25"/>
        <end position="27"/>
    </location>
</feature>
<feature type="helix" evidence="21">
    <location>
        <begin position="29"/>
        <end position="37"/>
    </location>
</feature>
<feature type="strand" evidence="21">
    <location>
        <begin position="43"/>
        <end position="50"/>
    </location>
</feature>
<feature type="turn" evidence="21">
    <location>
        <begin position="51"/>
        <end position="54"/>
    </location>
</feature>
<feature type="strand" evidence="21">
    <location>
        <begin position="55"/>
        <end position="63"/>
    </location>
</feature>
<feature type="helix" evidence="21">
    <location>
        <begin position="67"/>
        <end position="76"/>
    </location>
</feature>
<feature type="strand" evidence="21">
    <location>
        <begin position="77"/>
        <end position="81"/>
    </location>
</feature>
<feature type="strand" evidence="21">
    <location>
        <begin position="83"/>
        <end position="85"/>
    </location>
</feature>
<feature type="strand" evidence="21">
    <location>
        <begin position="87"/>
        <end position="91"/>
    </location>
</feature>
<feature type="helix" evidence="21">
    <location>
        <begin position="97"/>
        <end position="104"/>
    </location>
</feature>
<feature type="helix" evidence="22">
    <location>
        <begin position="532"/>
        <end position="535"/>
    </location>
</feature>
<feature type="helix" evidence="22">
    <location>
        <begin position="537"/>
        <end position="545"/>
    </location>
</feature>
<feature type="helix" evidence="22">
    <location>
        <begin position="549"/>
        <end position="553"/>
    </location>
</feature>
<feature type="helix" evidence="22">
    <location>
        <begin position="557"/>
        <end position="560"/>
    </location>
</feature>
<feature type="helix" evidence="22">
    <location>
        <begin position="562"/>
        <end position="571"/>
    </location>
</feature>
<comment type="function">
    <text evidence="10 11">One of the multiple factors required for polyadenylation and 3'-end cleavage of mammalian pre-mRNAs. This subunit is directly involved in the binding to pre-mRNAs.</text>
</comment>
<comment type="subunit">
    <text evidence="3 4 5 6 7 8 9">The CSTF complex is composed of CSTF1 (50 kDa subunit), CSTF2 (64 kDa subunit) and CSTF3 (77 kDa subunit). CSTF2 directly interacts with CSTF3, SYMPK and RPO2TC1. Interacts with HSF1 in heat-stressed cells. Interacts with CPSF2, CPSF3 and FIP1L1. Interacts with DDX1.</text>
</comment>
<comment type="interaction">
    <interactant intactId="EBI-711360">
        <id>P33240</id>
    </interactant>
    <interactant intactId="EBI-12318443">
        <id>Q8NFV4-4</id>
        <label>ABHD11</label>
    </interactant>
    <organismsDiffer>false</organismsDiffer>
    <experiments>3</experiments>
</comment>
<comment type="interaction">
    <interactant intactId="EBI-711360">
        <id>P33240</id>
    </interactant>
    <interactant intactId="EBI-357530">
        <id>Q9ULX6</id>
        <label>AKAP8L</label>
    </interactant>
    <organismsDiffer>false</organismsDiffer>
    <experiments>3</experiments>
</comment>
<comment type="interaction">
    <interactant intactId="EBI-711360">
        <id>P33240</id>
    </interactant>
    <interactant intactId="EBI-12102070">
        <id>Q9NXR5-2</id>
        <label>ANKRD10</label>
    </interactant>
    <organismsDiffer>false</organismsDiffer>
    <experiments>3</experiments>
</comment>
<comment type="interaction">
    <interactant intactId="EBI-711360">
        <id>P33240</id>
    </interactant>
    <interactant intactId="EBI-12811889">
        <id>Q9Y6H3</id>
        <label>ATP23</label>
    </interactant>
    <organismsDiffer>false</organismsDiffer>
    <experiments>3</experiments>
</comment>
<comment type="interaction">
    <interactant intactId="EBI-711360">
        <id>P33240</id>
    </interactant>
    <interactant intactId="EBI-473181">
        <id>Q99728</id>
        <label>BARD1</label>
    </interactant>
    <organismsDiffer>false</organismsDiffer>
    <experiments>8</experiments>
</comment>
<comment type="interaction">
    <interactant intactId="EBI-711360">
        <id>P33240</id>
    </interactant>
    <interactant intactId="EBI-930143">
        <id>Q6P1J9</id>
        <label>CDC73</label>
    </interactant>
    <organismsDiffer>false</organismsDiffer>
    <experiments>5</experiments>
</comment>
<comment type="interaction">
    <interactant intactId="EBI-711360">
        <id>P33240</id>
    </interactant>
    <interactant intactId="EBI-4314501">
        <id>P40199</id>
        <label>CEACAM6</label>
    </interactant>
    <organismsDiffer>false</organismsDiffer>
    <experiments>3</experiments>
</comment>
<comment type="interaction">
    <interactant intactId="EBI-711360">
        <id>P33240</id>
    </interactant>
    <interactant intactId="EBI-743033">
        <id>Q9NZN8</id>
        <label>CNOT2</label>
    </interactant>
    <organismsDiffer>false</organismsDiffer>
    <experiments>3</experiments>
</comment>
<comment type="interaction">
    <interactant intactId="EBI-711360">
        <id>P33240</id>
    </interactant>
    <interactant intactId="EBI-1043224">
        <id>Q9P2I0</id>
        <label>CPSF2</label>
    </interactant>
    <organismsDiffer>false</organismsDiffer>
    <experiments>2</experiments>
</comment>
<comment type="interaction">
    <interactant intactId="EBI-711360">
        <id>P33240</id>
    </interactant>
    <interactant intactId="EBI-10171902">
        <id>P56545-3</id>
        <label>CTBP2</label>
    </interactant>
    <organismsDiffer>false</organismsDiffer>
    <experiments>3</experiments>
</comment>
<comment type="interaction">
    <interactant intactId="EBI-711360">
        <id>P33240</id>
    </interactant>
    <interactant intactId="EBI-12193763">
        <id>A1KXE4-2</id>
        <label>FAM168B</label>
    </interactant>
    <organismsDiffer>false</organismsDiffer>
    <experiments>3</experiments>
</comment>
<comment type="interaction">
    <interactant intactId="EBI-711360">
        <id>P33240</id>
    </interactant>
    <interactant intactId="EBI-745201">
        <id>Q9BSH5</id>
        <label>HDHD3</label>
    </interactant>
    <organismsDiffer>false</organismsDiffer>
    <experiments>3</experiments>
</comment>
<comment type="interaction">
    <interactant intactId="EBI-711360">
        <id>P33240</id>
    </interactant>
    <interactant intactId="EBI-740220">
        <id>O14964</id>
        <label>HGS</label>
    </interactant>
    <organismsDiffer>false</organismsDiffer>
    <experiments>6</experiments>
</comment>
<comment type="interaction">
    <interactant intactId="EBI-711360">
        <id>P33240</id>
    </interactant>
    <interactant intactId="EBI-6509505">
        <id>Q0VD86</id>
        <label>INCA1</label>
    </interactant>
    <organismsDiffer>false</organismsDiffer>
    <experiments>3</experiments>
</comment>
<comment type="interaction">
    <interactant intactId="EBI-711360">
        <id>P33240</id>
    </interactant>
    <interactant intactId="EBI-10174029">
        <id>A6NJ78-4</id>
        <label>METTL15</label>
    </interactant>
    <organismsDiffer>false</organismsDiffer>
    <experiments>3</experiments>
</comment>
<comment type="interaction">
    <interactant intactId="EBI-711360">
        <id>P33240</id>
    </interactant>
    <interactant intactId="EBI-8487781">
        <id>Q8N6F8</id>
        <label>METTL27</label>
    </interactant>
    <organismsDiffer>false</organismsDiffer>
    <experiments>3</experiments>
</comment>
<comment type="interaction">
    <interactant intactId="EBI-711360">
        <id>P33240</id>
    </interactant>
    <interactant intactId="EBI-372832">
        <id>O95453</id>
        <label>PARN</label>
    </interactant>
    <organismsDiffer>false</organismsDiffer>
    <experiments>5</experiments>
</comment>
<comment type="interaction">
    <interactant intactId="EBI-711360">
        <id>P33240</id>
    </interactant>
    <interactant intactId="EBI-12029004">
        <id>P78424</id>
        <label>POU6F2</label>
    </interactant>
    <organismsDiffer>false</organismsDiffer>
    <experiments>3</experiments>
</comment>
<comment type="interaction">
    <interactant intactId="EBI-711360">
        <id>P33240</id>
    </interactant>
    <interactant intactId="EBI-11320284">
        <id>Q9NQX0</id>
        <label>PRDM6</label>
    </interactant>
    <organismsDiffer>false</organismsDiffer>
    <experiments>3</experiments>
</comment>
<comment type="interaction">
    <interactant intactId="EBI-711360">
        <id>P33240</id>
    </interactant>
    <interactant intactId="EBI-746118">
        <id>Q8HWS3</id>
        <label>RFX6</label>
    </interactant>
    <organismsDiffer>false</organismsDiffer>
    <experiments>3</experiments>
</comment>
<comment type="interaction">
    <interactant intactId="EBI-711360">
        <id>P33240</id>
    </interactant>
    <interactant intactId="EBI-12000762">
        <id>Q7Z5V6-2</id>
        <label>SAXO4</label>
    </interactant>
    <organismsDiffer>false</organismsDiffer>
    <experiments>3</experiments>
</comment>
<comment type="interaction">
    <interactant intactId="EBI-711360">
        <id>P33240</id>
    </interactant>
    <interactant intactId="EBI-954419">
        <id>Q99932</id>
        <label>SPAG8</label>
    </interactant>
    <organismsDiffer>false</organismsDiffer>
    <experiments>3</experiments>
</comment>
<comment type="interaction">
    <interactant intactId="EBI-711360">
        <id>P33240</id>
    </interactant>
    <interactant intactId="EBI-11959123">
        <id>Q99932-2</id>
        <label>SPAG8</label>
    </interactant>
    <organismsDiffer>false</organismsDiffer>
    <experiments>3</experiments>
</comment>
<comment type="interaction">
    <interactant intactId="EBI-711360">
        <id>P33240</id>
    </interactant>
    <interactant intactId="EBI-744674">
        <id>O75177</id>
        <label>SS18L1</label>
    </interactant>
    <organismsDiffer>false</organismsDiffer>
    <experiments>3</experiments>
</comment>
<comment type="interaction">
    <interactant intactId="EBI-711360">
        <id>P33240</id>
    </interactant>
    <interactant intactId="EBI-12843506">
        <id>Q8IWL8</id>
        <label>STH</label>
    </interactant>
    <organismsDiffer>false</organismsDiffer>
    <experiments>3</experiments>
</comment>
<comment type="interaction">
    <interactant intactId="EBI-711360">
        <id>P33240</id>
    </interactant>
    <interactant intactId="EBI-1051992">
        <id>Q92797</id>
        <label>SYMPK</label>
    </interactant>
    <organismsDiffer>false</organismsDiffer>
    <experiments>2</experiments>
</comment>
<comment type="interaction">
    <interactant intactId="EBI-711360">
        <id>P33240</id>
    </interactant>
    <interactant intactId="EBI-357061">
        <id>Q92734</id>
        <label>TFG</label>
    </interactant>
    <organismsDiffer>false</organismsDiffer>
    <experiments>6</experiments>
</comment>
<comment type="interaction">
    <interactant intactId="EBI-711360">
        <id>P33240</id>
    </interactant>
    <interactant intactId="EBI-12014388">
        <id>Q04726-4</id>
        <label>TLE3</label>
    </interactant>
    <organismsDiffer>false</organismsDiffer>
    <experiments>3</experiments>
</comment>
<comment type="interaction">
    <interactant intactId="EBI-711360">
        <id>P33240</id>
    </interactant>
    <interactant intactId="EBI-11741437">
        <id>Q08117-2</id>
        <label>TLE5</label>
    </interactant>
    <organismsDiffer>false</organismsDiffer>
    <experiments>3</experiments>
</comment>
<comment type="interaction">
    <interactant intactId="EBI-711360">
        <id>P33240</id>
    </interactant>
    <interactant intactId="EBI-12806590">
        <id>Q86WV8</id>
        <label>TSC1</label>
    </interactant>
    <organismsDiffer>false</organismsDiffer>
    <experiments>3</experiments>
</comment>
<comment type="interaction">
    <interactant intactId="EBI-711360">
        <id>P33240</id>
    </interactant>
    <interactant intactId="EBI-741480">
        <id>Q9UMX0</id>
        <label>UBQLN1</label>
    </interactant>
    <organismsDiffer>false</organismsDiffer>
    <experiments>7</experiments>
</comment>
<comment type="interaction">
    <interactant intactId="EBI-711360">
        <id>P33240</id>
    </interactant>
    <interactant intactId="EBI-10173939">
        <id>Q9UMX0-2</id>
        <label>UBQLN1</label>
    </interactant>
    <organismsDiffer>false</organismsDiffer>
    <experiments>3</experiments>
</comment>
<comment type="interaction">
    <interactant intactId="EBI-711360">
        <id>P33240</id>
    </interactant>
    <interactant intactId="EBI-947187">
        <id>Q9UHD9</id>
        <label>UBQLN2</label>
    </interactant>
    <organismsDiffer>false</organismsDiffer>
    <experiments>5</experiments>
</comment>
<comment type="interaction">
    <interactant intactId="EBI-711360">
        <id>P33240</id>
    </interactant>
    <interactant intactId="EBI-12068150">
        <id>Q6NVU6</id>
        <label>UFSP1</label>
    </interactant>
    <organismsDiffer>false</organismsDiffer>
    <experiments>3</experiments>
</comment>
<comment type="interaction">
    <interactant intactId="EBI-711360">
        <id>P33240</id>
    </interactant>
    <interactant intactId="EBI-11975223">
        <id>Q70EL1-9</id>
        <label>USP54</label>
    </interactant>
    <organismsDiffer>false</organismsDiffer>
    <experiments>3</experiments>
</comment>
<comment type="interaction">
    <interactant intactId="EBI-711360">
        <id>P33240</id>
    </interactant>
    <interactant intactId="EBI-9089622">
        <id>Q9BYN7</id>
        <label>ZNF341</label>
    </interactant>
    <organismsDiffer>false</organismsDiffer>
    <experiments>3</experiments>
</comment>
<comment type="interaction">
    <interactant intactId="EBI-711360">
        <id>P33240</id>
    </interactant>
    <interactant intactId="EBI-17234977">
        <id>A0A1U9X8X8</id>
    </interactant>
    <organismsDiffer>false</organismsDiffer>
    <experiments>3</experiments>
</comment>
<comment type="interaction">
    <interactant intactId="EBI-711374">
        <id>P33240-1</id>
    </interactant>
    <interactant intactId="EBI-998260">
        <id>P53999</id>
        <label>SUB1</label>
    </interactant>
    <organismsDiffer>false</organismsDiffer>
    <experiments>3</experiments>
</comment>
<comment type="subcellular location">
    <subcellularLocation>
        <location evidence="5 10">Nucleus</location>
    </subcellularLocation>
    <text evidence="5">Localized with DDX1 in cleavage bodies.</text>
</comment>
<comment type="alternative products">
    <event type="alternative splicing"/>
    <isoform>
        <id>P33240-1</id>
        <name>1</name>
        <sequence type="displayed"/>
    </isoform>
    <isoform>
        <id>P33240-2</id>
        <name>2</name>
        <sequence type="described" ref="VSP_014841"/>
    </isoform>
</comment>
<comment type="induction">
    <text evidence="12">Up-regulated during the G0 to S phase transition.</text>
</comment>
<comment type="disease" evidence="10">
    <disease id="DI-06838">
        <name>Intellectual developmental disorder, X-linked 113</name>
        <acronym>XLID113</acronym>
        <description>A disorder characterized by mild intellectual disability, and developmental delay mainly affecting verbal and non-verbal communication skills. Motor development is normal.</description>
        <dbReference type="MIM" id="301116"/>
    </disease>
    <text>The disease is caused by variants affecting the gene represented in this entry.</text>
</comment>
<gene>
    <name type="primary">CSTF2</name>
</gene>
<evidence type="ECO:0000255" key="1">
    <source>
        <dbReference type="PROSITE-ProRule" id="PRU00176"/>
    </source>
</evidence>
<evidence type="ECO:0000256" key="2">
    <source>
        <dbReference type="SAM" id="MobiDB-lite"/>
    </source>
</evidence>
<evidence type="ECO:0000269" key="3">
    <source>
    </source>
</evidence>
<evidence type="ECO:0000269" key="4">
    <source>
    </source>
</evidence>
<evidence type="ECO:0000269" key="5">
    <source>
    </source>
</evidence>
<evidence type="ECO:0000269" key="6">
    <source>
    </source>
</evidence>
<evidence type="ECO:0000269" key="7">
    <source>
    </source>
</evidence>
<evidence type="ECO:0000269" key="8">
    <source>
    </source>
</evidence>
<evidence type="ECO:0000269" key="9">
    <source>
    </source>
</evidence>
<evidence type="ECO:0000269" key="10">
    <source>
    </source>
</evidence>
<evidence type="ECO:0000269" key="11">
    <source>
    </source>
</evidence>
<evidence type="ECO:0000269" key="12">
    <source>
    </source>
</evidence>
<evidence type="ECO:0000303" key="13">
    <source>
    </source>
</evidence>
<evidence type="ECO:0007744" key="14">
    <source>
    </source>
</evidence>
<evidence type="ECO:0007744" key="15">
    <source>
    </source>
</evidence>
<evidence type="ECO:0007744" key="16">
    <source>
    </source>
</evidence>
<evidence type="ECO:0007744" key="17">
    <source>
    </source>
</evidence>
<evidence type="ECO:0007744" key="18">
    <source>
    </source>
</evidence>
<evidence type="ECO:0007744" key="19">
    <source>
    </source>
</evidence>
<evidence type="ECO:0007744" key="20">
    <source>
    </source>
</evidence>
<evidence type="ECO:0007829" key="21">
    <source>
        <dbReference type="PDB" id="1P1T"/>
    </source>
</evidence>
<evidence type="ECO:0007829" key="22">
    <source>
        <dbReference type="PDB" id="2J8P"/>
    </source>
</evidence>
<evidence type="ECO:0007829" key="23">
    <source>
        <dbReference type="PDB" id="6Q2I"/>
    </source>
</evidence>
<sequence>MAGLTVRDPAVDRSLRSVFVGNIPYEATEEQLKDIFSEVGPVVSFRLVYDRETGKPKGYGFCEYQDQETALSAMRNLNGREFSGRALRVDNAASEKNKEELKSLGTGAPVIESPYGETISPEDAPESISKAVASLPPEQMFELMKQMKLCVQNSPQEARNMLLQNPQLAYALLQAQVVMRIVDPEIALKILHRQTNIPTLIAGNPQPVHGAGPGSGSNVSMNQQNPQAPQAQSLGGMHVNGAPPLMQASMQGGVPAPGQMPAAVTGPGPGSLAPGGGMQAQVGMPGSGPVSMERGQVPMQDPRAAMQRGSLPANVPTPRGLLGDAPNDPRGGTLLSVTGEVEPRGYLGPPHQGPPMHHVPGHESRGPPPHELRGGPLPEPRPLMAEPRGPMLDQRGPPLDGRGGRDPRGIDARGMEARAMEARGLDARGLEARAMEARAMEARAMEARAMEARAMEVRGMEARGMDTRGPVPGPRGPIPSGMQGPSPINMGAVVPQGSRQVPVMQGTGMQGASIQGGSQPGGFSPGQNQVTPQDHEKAALIMQVLQLTADQIAMLPPEQRQSILILKEQIQKSTGAP</sequence>
<accession>P33240</accession>
<accession>Q5H951</accession>
<accession>Q6LA74</accession>
<accession>Q8N502</accession>
<protein>
    <recommendedName>
        <fullName>Cleavage stimulation factor subunit 2</fullName>
    </recommendedName>
    <alternativeName>
        <fullName>CF-1 64 kDa subunit</fullName>
    </alternativeName>
    <alternativeName>
        <fullName>Cleavage stimulation factor 64 kDa subunit</fullName>
        <shortName>CSTF 64 kDa subunit</shortName>
        <shortName>CstF-64</shortName>
    </alternativeName>
</protein>
<name>CSTF2_HUMAN</name>
<organism>
    <name type="scientific">Homo sapiens</name>
    <name type="common">Human</name>
    <dbReference type="NCBI Taxonomy" id="9606"/>
    <lineage>
        <taxon>Eukaryota</taxon>
        <taxon>Metazoa</taxon>
        <taxon>Chordata</taxon>
        <taxon>Craniata</taxon>
        <taxon>Vertebrata</taxon>
        <taxon>Euteleostomi</taxon>
        <taxon>Mammalia</taxon>
        <taxon>Eutheria</taxon>
        <taxon>Euarchontoglires</taxon>
        <taxon>Primates</taxon>
        <taxon>Haplorrhini</taxon>
        <taxon>Catarrhini</taxon>
        <taxon>Hominidae</taxon>
        <taxon>Homo</taxon>
    </lineage>
</organism>